<dbReference type="EMBL" id="CP000482">
    <property type="protein sequence ID" value="ABL00869.1"/>
    <property type="molecule type" value="Genomic_DNA"/>
</dbReference>
<dbReference type="RefSeq" id="WP_011737086.1">
    <property type="nucleotide sequence ID" value="NC_008609.1"/>
</dbReference>
<dbReference type="SMR" id="A1AU48"/>
<dbReference type="STRING" id="338966.Ppro_3276"/>
<dbReference type="KEGG" id="ppd:Ppro_3276"/>
<dbReference type="eggNOG" id="COG0218">
    <property type="taxonomic scope" value="Bacteria"/>
</dbReference>
<dbReference type="HOGENOM" id="CLU_033732_3_0_7"/>
<dbReference type="OrthoDB" id="9804921at2"/>
<dbReference type="Proteomes" id="UP000006732">
    <property type="component" value="Chromosome"/>
</dbReference>
<dbReference type="GO" id="GO:0005829">
    <property type="term" value="C:cytosol"/>
    <property type="evidence" value="ECO:0007669"/>
    <property type="project" value="TreeGrafter"/>
</dbReference>
<dbReference type="GO" id="GO:0005525">
    <property type="term" value="F:GTP binding"/>
    <property type="evidence" value="ECO:0007669"/>
    <property type="project" value="UniProtKB-UniRule"/>
</dbReference>
<dbReference type="GO" id="GO:0046872">
    <property type="term" value="F:metal ion binding"/>
    <property type="evidence" value="ECO:0007669"/>
    <property type="project" value="UniProtKB-KW"/>
</dbReference>
<dbReference type="GO" id="GO:0000917">
    <property type="term" value="P:division septum assembly"/>
    <property type="evidence" value="ECO:0007669"/>
    <property type="project" value="UniProtKB-KW"/>
</dbReference>
<dbReference type="CDD" id="cd01876">
    <property type="entry name" value="YihA_EngB"/>
    <property type="match status" value="1"/>
</dbReference>
<dbReference type="FunFam" id="3.40.50.300:FF:000098">
    <property type="entry name" value="Probable GTP-binding protein EngB"/>
    <property type="match status" value="1"/>
</dbReference>
<dbReference type="Gene3D" id="3.40.50.300">
    <property type="entry name" value="P-loop containing nucleotide triphosphate hydrolases"/>
    <property type="match status" value="1"/>
</dbReference>
<dbReference type="HAMAP" id="MF_00321">
    <property type="entry name" value="GTPase_EngB"/>
    <property type="match status" value="1"/>
</dbReference>
<dbReference type="InterPro" id="IPR030393">
    <property type="entry name" value="G_ENGB_dom"/>
</dbReference>
<dbReference type="InterPro" id="IPR006073">
    <property type="entry name" value="GTP-bd"/>
</dbReference>
<dbReference type="InterPro" id="IPR019987">
    <property type="entry name" value="GTP-bd_ribosome_bio_YsxC"/>
</dbReference>
<dbReference type="InterPro" id="IPR027417">
    <property type="entry name" value="P-loop_NTPase"/>
</dbReference>
<dbReference type="InterPro" id="IPR005225">
    <property type="entry name" value="Small_GTP-bd"/>
</dbReference>
<dbReference type="NCBIfam" id="TIGR03598">
    <property type="entry name" value="GTPase_YsxC"/>
    <property type="match status" value="1"/>
</dbReference>
<dbReference type="NCBIfam" id="TIGR00231">
    <property type="entry name" value="small_GTP"/>
    <property type="match status" value="1"/>
</dbReference>
<dbReference type="PANTHER" id="PTHR11649:SF13">
    <property type="entry name" value="ENGB-TYPE G DOMAIN-CONTAINING PROTEIN"/>
    <property type="match status" value="1"/>
</dbReference>
<dbReference type="PANTHER" id="PTHR11649">
    <property type="entry name" value="MSS1/TRME-RELATED GTP-BINDING PROTEIN"/>
    <property type="match status" value="1"/>
</dbReference>
<dbReference type="Pfam" id="PF01926">
    <property type="entry name" value="MMR_HSR1"/>
    <property type="match status" value="1"/>
</dbReference>
<dbReference type="SUPFAM" id="SSF52540">
    <property type="entry name" value="P-loop containing nucleoside triphosphate hydrolases"/>
    <property type="match status" value="1"/>
</dbReference>
<dbReference type="PROSITE" id="PS51706">
    <property type="entry name" value="G_ENGB"/>
    <property type="match status" value="1"/>
</dbReference>
<accession>A1AU48</accession>
<reference key="1">
    <citation type="submission" date="2006-10" db="EMBL/GenBank/DDBJ databases">
        <title>Complete sequence of chromosome of Pelobacter propionicus DSM 2379.</title>
        <authorList>
            <consortium name="US DOE Joint Genome Institute"/>
            <person name="Copeland A."/>
            <person name="Lucas S."/>
            <person name="Lapidus A."/>
            <person name="Barry K."/>
            <person name="Detter J.C."/>
            <person name="Glavina del Rio T."/>
            <person name="Hammon N."/>
            <person name="Israni S."/>
            <person name="Dalin E."/>
            <person name="Tice H."/>
            <person name="Pitluck S."/>
            <person name="Saunders E."/>
            <person name="Brettin T."/>
            <person name="Bruce D."/>
            <person name="Han C."/>
            <person name="Tapia R."/>
            <person name="Schmutz J."/>
            <person name="Larimer F."/>
            <person name="Land M."/>
            <person name="Hauser L."/>
            <person name="Kyrpides N."/>
            <person name="Kim E."/>
            <person name="Lovley D."/>
            <person name="Richardson P."/>
        </authorList>
    </citation>
    <scope>NUCLEOTIDE SEQUENCE [LARGE SCALE GENOMIC DNA]</scope>
    <source>
        <strain>DSM 2379 / NBRC 103807 / OttBd1</strain>
    </source>
</reference>
<proteinExistence type="inferred from homology"/>
<sequence length="200" mass="22546">MEVIKAEFIKSAVKPKDYPLETLPEVAFVGRSNVGKSSLINVLANRKSLVRTSSTPGRTQLINFFDINGVLTLVDLPGYGYAKAPPDVRKQWGPMIETYLARRGNLRAVVLILDIRRIPSDGDLQMLGWLETYDIPPIFVLTKCDKLSKVERAKQTALIASAIKRDRNELLHFSALSRDGRDAVWKEVLRLTLAQEEERI</sequence>
<organism>
    <name type="scientific">Pelobacter propionicus (strain DSM 2379 / NBRC 103807 / OttBd1)</name>
    <dbReference type="NCBI Taxonomy" id="338966"/>
    <lineage>
        <taxon>Bacteria</taxon>
        <taxon>Pseudomonadati</taxon>
        <taxon>Thermodesulfobacteriota</taxon>
        <taxon>Desulfuromonadia</taxon>
        <taxon>Desulfuromonadales</taxon>
        <taxon>Desulfuromonadaceae</taxon>
        <taxon>Pelobacter</taxon>
    </lineage>
</organism>
<evidence type="ECO:0000255" key="1">
    <source>
        <dbReference type="HAMAP-Rule" id="MF_00321"/>
    </source>
</evidence>
<feature type="chain" id="PRO_1000005838" description="Probable GTP-binding protein EngB">
    <location>
        <begin position="1"/>
        <end position="200"/>
    </location>
</feature>
<feature type="domain" description="EngB-type G" evidence="1">
    <location>
        <begin position="22"/>
        <end position="194"/>
    </location>
</feature>
<feature type="binding site" evidence="1">
    <location>
        <begin position="30"/>
        <end position="37"/>
    </location>
    <ligand>
        <name>GTP</name>
        <dbReference type="ChEBI" id="CHEBI:37565"/>
    </ligand>
</feature>
<feature type="binding site" evidence="1">
    <location>
        <position position="37"/>
    </location>
    <ligand>
        <name>Mg(2+)</name>
        <dbReference type="ChEBI" id="CHEBI:18420"/>
    </ligand>
</feature>
<feature type="binding site" evidence="1">
    <location>
        <begin position="57"/>
        <end position="61"/>
    </location>
    <ligand>
        <name>GTP</name>
        <dbReference type="ChEBI" id="CHEBI:37565"/>
    </ligand>
</feature>
<feature type="binding site" evidence="1">
    <location>
        <position position="59"/>
    </location>
    <ligand>
        <name>Mg(2+)</name>
        <dbReference type="ChEBI" id="CHEBI:18420"/>
    </ligand>
</feature>
<feature type="binding site" evidence="1">
    <location>
        <begin position="75"/>
        <end position="78"/>
    </location>
    <ligand>
        <name>GTP</name>
        <dbReference type="ChEBI" id="CHEBI:37565"/>
    </ligand>
</feature>
<feature type="binding site" evidence="1">
    <location>
        <begin position="142"/>
        <end position="145"/>
    </location>
    <ligand>
        <name>GTP</name>
        <dbReference type="ChEBI" id="CHEBI:37565"/>
    </ligand>
</feature>
<feature type="binding site" evidence="1">
    <location>
        <begin position="173"/>
        <end position="175"/>
    </location>
    <ligand>
        <name>GTP</name>
        <dbReference type="ChEBI" id="CHEBI:37565"/>
    </ligand>
</feature>
<gene>
    <name evidence="1" type="primary">engB</name>
    <name type="ordered locus">Ppro_3276</name>
</gene>
<keyword id="KW-0131">Cell cycle</keyword>
<keyword id="KW-0132">Cell division</keyword>
<keyword id="KW-0342">GTP-binding</keyword>
<keyword id="KW-0460">Magnesium</keyword>
<keyword id="KW-0479">Metal-binding</keyword>
<keyword id="KW-0547">Nucleotide-binding</keyword>
<keyword id="KW-1185">Reference proteome</keyword>
<keyword id="KW-0717">Septation</keyword>
<comment type="function">
    <text evidence="1">Necessary for normal cell division and for the maintenance of normal septation.</text>
</comment>
<comment type="cofactor">
    <cofactor evidence="1">
        <name>Mg(2+)</name>
        <dbReference type="ChEBI" id="CHEBI:18420"/>
    </cofactor>
</comment>
<comment type="similarity">
    <text evidence="1">Belongs to the TRAFAC class TrmE-Era-EngA-EngB-Septin-like GTPase superfamily. EngB GTPase family.</text>
</comment>
<protein>
    <recommendedName>
        <fullName evidence="1">Probable GTP-binding protein EngB</fullName>
    </recommendedName>
</protein>
<name>ENGB_PELPD</name>